<reference key="1">
    <citation type="journal article" date="2005" name="Proc. Natl. Acad. Sci. U.S.A.">
        <title>Whole genome sequence of Staphylococcus saprophyticus reveals the pathogenesis of uncomplicated urinary tract infection.</title>
        <authorList>
            <person name="Kuroda M."/>
            <person name="Yamashita A."/>
            <person name="Hirakawa H."/>
            <person name="Kumano M."/>
            <person name="Morikawa K."/>
            <person name="Higashide M."/>
            <person name="Maruyama A."/>
            <person name="Inose Y."/>
            <person name="Matoba K."/>
            <person name="Toh H."/>
            <person name="Kuhara S."/>
            <person name="Hattori M."/>
            <person name="Ohta T."/>
        </authorList>
    </citation>
    <scope>NUCLEOTIDE SEQUENCE [LARGE SCALE GENOMIC DNA]</scope>
    <source>
        <strain>ATCC 15305 / DSM 20229 / NCIMB 8711 / NCTC 7292 / S-41</strain>
    </source>
</reference>
<evidence type="ECO:0000255" key="1">
    <source>
        <dbReference type="HAMAP-Rule" id="MF_00530"/>
    </source>
</evidence>
<comment type="function">
    <text evidence="1">Produces ATP from ADP in the presence of a proton gradient across the membrane.</text>
</comment>
<comment type="subunit">
    <text>F-type ATPases have 2 components, CF(1) - the catalytic core - and CF(0) - the membrane proton channel. CF(1) has five subunits: alpha(3), beta(3), gamma(1), delta(1), epsilon(1). CF(0) has three main subunits: a, b and c.</text>
</comment>
<comment type="subcellular location">
    <subcellularLocation>
        <location evidence="1">Cell membrane</location>
        <topology evidence="1">Peripheral membrane protein</topology>
    </subcellularLocation>
</comment>
<comment type="similarity">
    <text evidence="1">Belongs to the ATPase epsilon chain family.</text>
</comment>
<accession>Q49Z49</accession>
<protein>
    <recommendedName>
        <fullName evidence="1">ATP synthase epsilon chain</fullName>
    </recommendedName>
    <alternativeName>
        <fullName evidence="1">ATP synthase F1 sector epsilon subunit</fullName>
    </alternativeName>
    <alternativeName>
        <fullName evidence="1">F-ATPase epsilon subunit</fullName>
    </alternativeName>
</protein>
<keyword id="KW-0066">ATP synthesis</keyword>
<keyword id="KW-1003">Cell membrane</keyword>
<keyword id="KW-0139">CF(1)</keyword>
<keyword id="KW-0375">Hydrogen ion transport</keyword>
<keyword id="KW-0406">Ion transport</keyword>
<keyword id="KW-0472">Membrane</keyword>
<keyword id="KW-1185">Reference proteome</keyword>
<keyword id="KW-0813">Transport</keyword>
<dbReference type="EMBL" id="AP008934">
    <property type="protein sequence ID" value="BAE17927.1"/>
    <property type="molecule type" value="Genomic_DNA"/>
</dbReference>
<dbReference type="RefSeq" id="WP_002482727.1">
    <property type="nucleotide sequence ID" value="NZ_MTGA01000032.1"/>
</dbReference>
<dbReference type="SMR" id="Q49Z49"/>
<dbReference type="KEGG" id="ssp:SSP0782"/>
<dbReference type="eggNOG" id="COG0355">
    <property type="taxonomic scope" value="Bacteria"/>
</dbReference>
<dbReference type="HOGENOM" id="CLU_084338_1_3_9"/>
<dbReference type="OrthoDB" id="9804110at2"/>
<dbReference type="Proteomes" id="UP000006371">
    <property type="component" value="Chromosome"/>
</dbReference>
<dbReference type="GO" id="GO:0005886">
    <property type="term" value="C:plasma membrane"/>
    <property type="evidence" value="ECO:0007669"/>
    <property type="project" value="UniProtKB-SubCell"/>
</dbReference>
<dbReference type="GO" id="GO:0045259">
    <property type="term" value="C:proton-transporting ATP synthase complex"/>
    <property type="evidence" value="ECO:0007669"/>
    <property type="project" value="UniProtKB-KW"/>
</dbReference>
<dbReference type="GO" id="GO:0005524">
    <property type="term" value="F:ATP binding"/>
    <property type="evidence" value="ECO:0007669"/>
    <property type="project" value="UniProtKB-UniRule"/>
</dbReference>
<dbReference type="GO" id="GO:0046933">
    <property type="term" value="F:proton-transporting ATP synthase activity, rotational mechanism"/>
    <property type="evidence" value="ECO:0007669"/>
    <property type="project" value="UniProtKB-UniRule"/>
</dbReference>
<dbReference type="CDD" id="cd12152">
    <property type="entry name" value="F1-ATPase_delta"/>
    <property type="match status" value="1"/>
</dbReference>
<dbReference type="FunFam" id="1.20.5.440:FF:000001">
    <property type="entry name" value="ATP synthase epsilon chain"/>
    <property type="match status" value="1"/>
</dbReference>
<dbReference type="Gene3D" id="1.20.5.440">
    <property type="entry name" value="ATP synthase delta/epsilon subunit, C-terminal domain"/>
    <property type="match status" value="1"/>
</dbReference>
<dbReference type="Gene3D" id="2.60.15.10">
    <property type="entry name" value="F0F1 ATP synthase delta/epsilon subunit, N-terminal"/>
    <property type="match status" value="1"/>
</dbReference>
<dbReference type="HAMAP" id="MF_00530">
    <property type="entry name" value="ATP_synth_epsil_bac"/>
    <property type="match status" value="1"/>
</dbReference>
<dbReference type="InterPro" id="IPR036794">
    <property type="entry name" value="ATP_F1_dsu/esu_C_sf"/>
</dbReference>
<dbReference type="InterPro" id="IPR001469">
    <property type="entry name" value="ATP_synth_F1_dsu/esu"/>
</dbReference>
<dbReference type="InterPro" id="IPR020546">
    <property type="entry name" value="ATP_synth_F1_dsu/esu_N"/>
</dbReference>
<dbReference type="InterPro" id="IPR020547">
    <property type="entry name" value="ATP_synth_F1_esu_C"/>
</dbReference>
<dbReference type="InterPro" id="IPR036771">
    <property type="entry name" value="ATPsynth_dsu/esu_N"/>
</dbReference>
<dbReference type="NCBIfam" id="TIGR01216">
    <property type="entry name" value="ATP_synt_epsi"/>
    <property type="match status" value="1"/>
</dbReference>
<dbReference type="NCBIfam" id="NF001846">
    <property type="entry name" value="PRK00571.1-3"/>
    <property type="match status" value="1"/>
</dbReference>
<dbReference type="PANTHER" id="PTHR13822">
    <property type="entry name" value="ATP SYNTHASE DELTA/EPSILON CHAIN"/>
    <property type="match status" value="1"/>
</dbReference>
<dbReference type="PANTHER" id="PTHR13822:SF10">
    <property type="entry name" value="ATP SYNTHASE EPSILON CHAIN, CHLOROPLASTIC"/>
    <property type="match status" value="1"/>
</dbReference>
<dbReference type="Pfam" id="PF00401">
    <property type="entry name" value="ATP-synt_DE"/>
    <property type="match status" value="1"/>
</dbReference>
<dbReference type="Pfam" id="PF02823">
    <property type="entry name" value="ATP-synt_DE_N"/>
    <property type="match status" value="1"/>
</dbReference>
<dbReference type="SUPFAM" id="SSF46604">
    <property type="entry name" value="Epsilon subunit of F1F0-ATP synthase C-terminal domain"/>
    <property type="match status" value="1"/>
</dbReference>
<dbReference type="SUPFAM" id="SSF51344">
    <property type="entry name" value="Epsilon subunit of F1F0-ATP synthase N-terminal domain"/>
    <property type="match status" value="1"/>
</dbReference>
<name>ATPE_STAS1</name>
<organism>
    <name type="scientific">Staphylococcus saprophyticus subsp. saprophyticus (strain ATCC 15305 / DSM 20229 / NCIMB 8711 / NCTC 7292 / S-41)</name>
    <dbReference type="NCBI Taxonomy" id="342451"/>
    <lineage>
        <taxon>Bacteria</taxon>
        <taxon>Bacillati</taxon>
        <taxon>Bacillota</taxon>
        <taxon>Bacilli</taxon>
        <taxon>Bacillales</taxon>
        <taxon>Staphylococcaceae</taxon>
        <taxon>Staphylococcus</taxon>
    </lineage>
</organism>
<gene>
    <name evidence="1" type="primary">atpC</name>
    <name type="ordered locus">SSP0782</name>
</gene>
<feature type="chain" id="PRO_0000188209" description="ATP synthase epsilon chain">
    <location>
        <begin position="1"/>
        <end position="134"/>
    </location>
</feature>
<proteinExistence type="inferred from homology"/>
<sequence length="134" mass="14668">MNTLSLNIVTPNGSVYDREDVNLAVLQTTAGEIGVMYGHIPTVAALEIGYVKINFDGGSEYIAVSEGFVEVRQDKLSIIVQTAEPANEIDVARAELAKSRAESHLNNEEDNSDVNRAKRALERANNRIRVANLQ</sequence>